<accession>C6C1T0</accession>
<organism>
    <name type="scientific">Maridesulfovibrio salexigens (strain ATCC 14822 / DSM 2638 / NCIMB 8403 / VKM B-1763)</name>
    <name type="common">Desulfovibrio salexigens</name>
    <dbReference type="NCBI Taxonomy" id="526222"/>
    <lineage>
        <taxon>Bacteria</taxon>
        <taxon>Pseudomonadati</taxon>
        <taxon>Thermodesulfobacteriota</taxon>
        <taxon>Desulfovibrionia</taxon>
        <taxon>Desulfovibrionales</taxon>
        <taxon>Desulfovibrionaceae</taxon>
        <taxon>Maridesulfovibrio</taxon>
    </lineage>
</organism>
<dbReference type="EMBL" id="CP001649">
    <property type="protein sequence ID" value="ACS79326.1"/>
    <property type="molecule type" value="Genomic_DNA"/>
</dbReference>
<dbReference type="RefSeq" id="WP_015851144.1">
    <property type="nucleotide sequence ID" value="NC_012881.1"/>
</dbReference>
<dbReference type="SMR" id="C6C1T0"/>
<dbReference type="STRING" id="526222.Desal_1263"/>
<dbReference type="KEGG" id="dsa:Desal_1263"/>
<dbReference type="eggNOG" id="COG0264">
    <property type="taxonomic scope" value="Bacteria"/>
</dbReference>
<dbReference type="HOGENOM" id="CLU_047155_1_1_7"/>
<dbReference type="Proteomes" id="UP000002601">
    <property type="component" value="Chromosome"/>
</dbReference>
<dbReference type="GO" id="GO:0005737">
    <property type="term" value="C:cytoplasm"/>
    <property type="evidence" value="ECO:0007669"/>
    <property type="project" value="UniProtKB-SubCell"/>
</dbReference>
<dbReference type="GO" id="GO:0003746">
    <property type="term" value="F:translation elongation factor activity"/>
    <property type="evidence" value="ECO:0007669"/>
    <property type="project" value="UniProtKB-UniRule"/>
</dbReference>
<dbReference type="CDD" id="cd14275">
    <property type="entry name" value="UBA_EF-Ts"/>
    <property type="match status" value="1"/>
</dbReference>
<dbReference type="FunFam" id="1.10.286.20:FF:000001">
    <property type="entry name" value="Elongation factor Ts"/>
    <property type="match status" value="1"/>
</dbReference>
<dbReference type="FunFam" id="1.10.8.10:FF:000001">
    <property type="entry name" value="Elongation factor Ts"/>
    <property type="match status" value="1"/>
</dbReference>
<dbReference type="Gene3D" id="1.10.286.20">
    <property type="match status" value="1"/>
</dbReference>
<dbReference type="Gene3D" id="1.10.8.10">
    <property type="entry name" value="DNA helicase RuvA subunit, C-terminal domain"/>
    <property type="match status" value="1"/>
</dbReference>
<dbReference type="Gene3D" id="3.30.479.20">
    <property type="entry name" value="Elongation factor Ts, dimerisation domain"/>
    <property type="match status" value="1"/>
</dbReference>
<dbReference type="HAMAP" id="MF_00050">
    <property type="entry name" value="EF_Ts"/>
    <property type="match status" value="1"/>
</dbReference>
<dbReference type="InterPro" id="IPR036402">
    <property type="entry name" value="EF-Ts_dimer_sf"/>
</dbReference>
<dbReference type="InterPro" id="IPR001816">
    <property type="entry name" value="Transl_elong_EFTs/EF1B"/>
</dbReference>
<dbReference type="InterPro" id="IPR014039">
    <property type="entry name" value="Transl_elong_EFTs/EF1B_dimer"/>
</dbReference>
<dbReference type="InterPro" id="IPR018101">
    <property type="entry name" value="Transl_elong_Ts_CS"/>
</dbReference>
<dbReference type="InterPro" id="IPR009060">
    <property type="entry name" value="UBA-like_sf"/>
</dbReference>
<dbReference type="NCBIfam" id="TIGR00116">
    <property type="entry name" value="tsf"/>
    <property type="match status" value="2"/>
</dbReference>
<dbReference type="PANTHER" id="PTHR11741">
    <property type="entry name" value="ELONGATION FACTOR TS"/>
    <property type="match status" value="1"/>
</dbReference>
<dbReference type="PANTHER" id="PTHR11741:SF0">
    <property type="entry name" value="ELONGATION FACTOR TS, MITOCHONDRIAL"/>
    <property type="match status" value="1"/>
</dbReference>
<dbReference type="Pfam" id="PF00889">
    <property type="entry name" value="EF_TS"/>
    <property type="match status" value="1"/>
</dbReference>
<dbReference type="SUPFAM" id="SSF54713">
    <property type="entry name" value="Elongation factor Ts (EF-Ts), dimerisation domain"/>
    <property type="match status" value="1"/>
</dbReference>
<dbReference type="SUPFAM" id="SSF46934">
    <property type="entry name" value="UBA-like"/>
    <property type="match status" value="1"/>
</dbReference>
<dbReference type="PROSITE" id="PS01126">
    <property type="entry name" value="EF_TS_1"/>
    <property type="match status" value="1"/>
</dbReference>
<dbReference type="PROSITE" id="PS01127">
    <property type="entry name" value="EF_TS_2"/>
    <property type="match status" value="1"/>
</dbReference>
<name>EFTS_MARSD</name>
<gene>
    <name evidence="1" type="primary">tsf</name>
    <name type="ordered locus">Desal_1263</name>
</gene>
<proteinExistence type="inferred from homology"/>
<comment type="function">
    <text evidence="1">Associates with the EF-Tu.GDP complex and induces the exchange of GDP to GTP. It remains bound to the aminoacyl-tRNA.EF-Tu.GTP complex up to the GTP hydrolysis stage on the ribosome.</text>
</comment>
<comment type="subcellular location">
    <subcellularLocation>
        <location evidence="1">Cytoplasm</location>
    </subcellularLocation>
</comment>
<comment type="similarity">
    <text evidence="1">Belongs to the EF-Ts family.</text>
</comment>
<reference key="1">
    <citation type="submission" date="2009-06" db="EMBL/GenBank/DDBJ databases">
        <title>Complete sequence of Desulfovibrio salexigens DSM 2638.</title>
        <authorList>
            <consortium name="US DOE Joint Genome Institute"/>
            <person name="Lucas S."/>
            <person name="Copeland A."/>
            <person name="Lapidus A."/>
            <person name="Glavina del Rio T."/>
            <person name="Tice H."/>
            <person name="Bruce D."/>
            <person name="Goodwin L."/>
            <person name="Pitluck S."/>
            <person name="Munk A.C."/>
            <person name="Brettin T."/>
            <person name="Detter J.C."/>
            <person name="Han C."/>
            <person name="Tapia R."/>
            <person name="Larimer F."/>
            <person name="Land M."/>
            <person name="Hauser L."/>
            <person name="Kyrpides N."/>
            <person name="Anderson I."/>
            <person name="Wall J.D."/>
            <person name="Arkin A.P."/>
            <person name="Dehal P."/>
            <person name="Chivian D."/>
            <person name="Giles B."/>
            <person name="Hazen T.C."/>
        </authorList>
    </citation>
    <scope>NUCLEOTIDE SEQUENCE [LARGE SCALE GENOMIC DNA]</scope>
    <source>
        <strain>ATCC 14822 / DSM 2638 / NCIMB 8403 / VKM B-1763</strain>
    </source>
</reference>
<feature type="chain" id="PRO_1000202236" description="Elongation factor Ts">
    <location>
        <begin position="1"/>
        <end position="206"/>
    </location>
</feature>
<feature type="region of interest" description="Involved in Mg(2+) ion dislocation from EF-Tu" evidence="1">
    <location>
        <begin position="81"/>
        <end position="84"/>
    </location>
</feature>
<keyword id="KW-0963">Cytoplasm</keyword>
<keyword id="KW-0251">Elongation factor</keyword>
<keyword id="KW-0648">Protein biosynthesis</keyword>
<keyword id="KW-1185">Reference proteome</keyword>
<protein>
    <recommendedName>
        <fullName evidence="1">Elongation factor Ts</fullName>
        <shortName evidence="1">EF-Ts</shortName>
    </recommendedName>
</protein>
<sequence length="206" mass="22758">MAITAQMVKALREKTGVGMMDCKKALAECDGNEENAIKYLREKGLAKAAKKAGRATSEGLVGTYTHSNGKLVAMVELKCETDFVAKAEQFIQLSKDLAMQVAATSPVCVKPEDLPQEMLEKEKEIYKQQAIAEGKPENIAEKIVEGRVNKYYKEVCLLEQPFIKDDKKTIKDLLNDTIAVLGENMQIGRFARINLAEAVAEESEAE</sequence>
<evidence type="ECO:0000255" key="1">
    <source>
        <dbReference type="HAMAP-Rule" id="MF_00050"/>
    </source>
</evidence>